<dbReference type="EC" id="2.2.1.7" evidence="1"/>
<dbReference type="EMBL" id="CP000969">
    <property type="protein sequence ID" value="ACB09401.1"/>
    <property type="molecule type" value="Genomic_DNA"/>
</dbReference>
<dbReference type="RefSeq" id="WP_012310912.1">
    <property type="nucleotide sequence ID" value="NC_010483.1"/>
</dbReference>
<dbReference type="SMR" id="B1LAQ3"/>
<dbReference type="KEGG" id="trq:TRQ2_1054"/>
<dbReference type="HOGENOM" id="CLU_009227_1_4_0"/>
<dbReference type="UniPathway" id="UPA00064">
    <property type="reaction ID" value="UER00091"/>
</dbReference>
<dbReference type="Proteomes" id="UP000001687">
    <property type="component" value="Chromosome"/>
</dbReference>
<dbReference type="GO" id="GO:0005829">
    <property type="term" value="C:cytosol"/>
    <property type="evidence" value="ECO:0007669"/>
    <property type="project" value="TreeGrafter"/>
</dbReference>
<dbReference type="GO" id="GO:0008661">
    <property type="term" value="F:1-deoxy-D-xylulose-5-phosphate synthase activity"/>
    <property type="evidence" value="ECO:0007669"/>
    <property type="project" value="UniProtKB-UniRule"/>
</dbReference>
<dbReference type="GO" id="GO:0000287">
    <property type="term" value="F:magnesium ion binding"/>
    <property type="evidence" value="ECO:0007669"/>
    <property type="project" value="UniProtKB-UniRule"/>
</dbReference>
<dbReference type="GO" id="GO:0030976">
    <property type="term" value="F:thiamine pyrophosphate binding"/>
    <property type="evidence" value="ECO:0007669"/>
    <property type="project" value="UniProtKB-UniRule"/>
</dbReference>
<dbReference type="GO" id="GO:0052865">
    <property type="term" value="P:1-deoxy-D-xylulose 5-phosphate biosynthetic process"/>
    <property type="evidence" value="ECO:0007669"/>
    <property type="project" value="UniProtKB-UniPathway"/>
</dbReference>
<dbReference type="GO" id="GO:0019288">
    <property type="term" value="P:isopentenyl diphosphate biosynthetic process, methylerythritol 4-phosphate pathway"/>
    <property type="evidence" value="ECO:0007669"/>
    <property type="project" value="TreeGrafter"/>
</dbReference>
<dbReference type="GO" id="GO:0016114">
    <property type="term" value="P:terpenoid biosynthetic process"/>
    <property type="evidence" value="ECO:0007669"/>
    <property type="project" value="UniProtKB-UniRule"/>
</dbReference>
<dbReference type="GO" id="GO:0009228">
    <property type="term" value="P:thiamine biosynthetic process"/>
    <property type="evidence" value="ECO:0007669"/>
    <property type="project" value="UniProtKB-UniRule"/>
</dbReference>
<dbReference type="CDD" id="cd02007">
    <property type="entry name" value="TPP_DXS"/>
    <property type="match status" value="1"/>
</dbReference>
<dbReference type="CDD" id="cd07033">
    <property type="entry name" value="TPP_PYR_DXS_TK_like"/>
    <property type="match status" value="1"/>
</dbReference>
<dbReference type="FunFam" id="3.40.50.970:FF:000005">
    <property type="entry name" value="1-deoxy-D-xylulose-5-phosphate synthase"/>
    <property type="match status" value="1"/>
</dbReference>
<dbReference type="Gene3D" id="3.40.50.920">
    <property type="match status" value="1"/>
</dbReference>
<dbReference type="Gene3D" id="3.40.50.970">
    <property type="match status" value="2"/>
</dbReference>
<dbReference type="HAMAP" id="MF_00315">
    <property type="entry name" value="DXP_synth"/>
    <property type="match status" value="1"/>
</dbReference>
<dbReference type="InterPro" id="IPR005477">
    <property type="entry name" value="Dxylulose-5-P_synthase"/>
</dbReference>
<dbReference type="InterPro" id="IPR029061">
    <property type="entry name" value="THDP-binding"/>
</dbReference>
<dbReference type="InterPro" id="IPR009014">
    <property type="entry name" value="Transketo_C/PFOR_II"/>
</dbReference>
<dbReference type="InterPro" id="IPR005475">
    <property type="entry name" value="Transketolase-like_Pyr-bd"/>
</dbReference>
<dbReference type="InterPro" id="IPR033248">
    <property type="entry name" value="Transketolase_C"/>
</dbReference>
<dbReference type="InterPro" id="IPR049557">
    <property type="entry name" value="Transketolase_CS"/>
</dbReference>
<dbReference type="NCBIfam" id="TIGR00204">
    <property type="entry name" value="dxs"/>
    <property type="match status" value="1"/>
</dbReference>
<dbReference type="NCBIfam" id="NF003933">
    <property type="entry name" value="PRK05444.2-2"/>
    <property type="match status" value="1"/>
</dbReference>
<dbReference type="PANTHER" id="PTHR43322">
    <property type="entry name" value="1-D-DEOXYXYLULOSE 5-PHOSPHATE SYNTHASE-RELATED"/>
    <property type="match status" value="1"/>
</dbReference>
<dbReference type="PANTHER" id="PTHR43322:SF5">
    <property type="entry name" value="1-DEOXY-D-XYLULOSE-5-PHOSPHATE SYNTHASE, CHLOROPLASTIC"/>
    <property type="match status" value="1"/>
</dbReference>
<dbReference type="Pfam" id="PF13292">
    <property type="entry name" value="DXP_synthase_N"/>
    <property type="match status" value="1"/>
</dbReference>
<dbReference type="Pfam" id="PF02779">
    <property type="entry name" value="Transket_pyr"/>
    <property type="match status" value="1"/>
</dbReference>
<dbReference type="Pfam" id="PF02780">
    <property type="entry name" value="Transketolase_C"/>
    <property type="match status" value="1"/>
</dbReference>
<dbReference type="SMART" id="SM00861">
    <property type="entry name" value="Transket_pyr"/>
    <property type="match status" value="1"/>
</dbReference>
<dbReference type="SUPFAM" id="SSF52518">
    <property type="entry name" value="Thiamin diphosphate-binding fold (THDP-binding)"/>
    <property type="match status" value="2"/>
</dbReference>
<dbReference type="SUPFAM" id="SSF52922">
    <property type="entry name" value="TK C-terminal domain-like"/>
    <property type="match status" value="1"/>
</dbReference>
<dbReference type="PROSITE" id="PS00801">
    <property type="entry name" value="TRANSKETOLASE_1"/>
    <property type="match status" value="1"/>
</dbReference>
<organism>
    <name type="scientific">Thermotoga sp. (strain RQ2)</name>
    <dbReference type="NCBI Taxonomy" id="126740"/>
    <lineage>
        <taxon>Bacteria</taxon>
        <taxon>Thermotogati</taxon>
        <taxon>Thermotogota</taxon>
        <taxon>Thermotogae</taxon>
        <taxon>Thermotogales</taxon>
        <taxon>Thermotogaceae</taxon>
        <taxon>Thermotoga</taxon>
    </lineage>
</organism>
<accession>B1LAQ3</accession>
<keyword id="KW-0414">Isoprene biosynthesis</keyword>
<keyword id="KW-0460">Magnesium</keyword>
<keyword id="KW-0479">Metal-binding</keyword>
<keyword id="KW-0784">Thiamine biosynthesis</keyword>
<keyword id="KW-0786">Thiamine pyrophosphate</keyword>
<keyword id="KW-0808">Transferase</keyword>
<evidence type="ECO:0000255" key="1">
    <source>
        <dbReference type="HAMAP-Rule" id="MF_00315"/>
    </source>
</evidence>
<protein>
    <recommendedName>
        <fullName evidence="1">1-deoxy-D-xylulose-5-phosphate synthase</fullName>
        <ecNumber evidence="1">2.2.1.7</ecNumber>
    </recommendedName>
    <alternativeName>
        <fullName evidence="1">1-deoxyxylulose-5-phosphate synthase</fullName>
        <shortName evidence="1">DXP synthase</shortName>
        <shortName evidence="1">DXPS</shortName>
    </alternativeName>
</protein>
<gene>
    <name evidence="1" type="primary">dxs</name>
    <name type="ordered locus">TRQ2_1054</name>
</gene>
<comment type="function">
    <text evidence="1">Catalyzes the acyloin condensation reaction between C atoms 2 and 3 of pyruvate and glyceraldehyde 3-phosphate to yield 1-deoxy-D-xylulose-5-phosphate (DXP).</text>
</comment>
<comment type="catalytic activity">
    <reaction evidence="1">
        <text>D-glyceraldehyde 3-phosphate + pyruvate + H(+) = 1-deoxy-D-xylulose 5-phosphate + CO2</text>
        <dbReference type="Rhea" id="RHEA:12605"/>
        <dbReference type="ChEBI" id="CHEBI:15361"/>
        <dbReference type="ChEBI" id="CHEBI:15378"/>
        <dbReference type="ChEBI" id="CHEBI:16526"/>
        <dbReference type="ChEBI" id="CHEBI:57792"/>
        <dbReference type="ChEBI" id="CHEBI:59776"/>
        <dbReference type="EC" id="2.2.1.7"/>
    </reaction>
</comment>
<comment type="cofactor">
    <cofactor evidence="1">
        <name>Mg(2+)</name>
        <dbReference type="ChEBI" id="CHEBI:18420"/>
    </cofactor>
    <text evidence="1">Binds 1 Mg(2+) ion per subunit.</text>
</comment>
<comment type="cofactor">
    <cofactor evidence="1">
        <name>thiamine diphosphate</name>
        <dbReference type="ChEBI" id="CHEBI:58937"/>
    </cofactor>
    <text evidence="1">Binds 1 thiamine pyrophosphate per subunit.</text>
</comment>
<comment type="pathway">
    <text evidence="1">Metabolic intermediate biosynthesis; 1-deoxy-D-xylulose 5-phosphate biosynthesis; 1-deoxy-D-xylulose 5-phosphate from D-glyceraldehyde 3-phosphate and pyruvate: step 1/1.</text>
</comment>
<comment type="subunit">
    <text evidence="1">Homodimer.</text>
</comment>
<comment type="similarity">
    <text evidence="1">Belongs to the transketolase family. DXPS subfamily.</text>
</comment>
<name>DXS_THESQ</name>
<reference key="1">
    <citation type="journal article" date="2011" name="J. Bacteriol.">
        <title>Genome sequence of Thermotoga sp. strain RQ2, a hyperthermophilic bacterium isolated from a geothermally heated region of the seafloor near Ribeira Quente, the Azores.</title>
        <authorList>
            <person name="Swithers K.S."/>
            <person name="DiPippo J.L."/>
            <person name="Bruce D.C."/>
            <person name="Detter C."/>
            <person name="Tapia R."/>
            <person name="Han S."/>
            <person name="Saunders E."/>
            <person name="Goodwin L.A."/>
            <person name="Han J."/>
            <person name="Woyke T."/>
            <person name="Pitluck S."/>
            <person name="Pennacchio L."/>
            <person name="Nolan M."/>
            <person name="Mikhailova N."/>
            <person name="Lykidis A."/>
            <person name="Land M.L."/>
            <person name="Brettin T."/>
            <person name="Stetter K.O."/>
            <person name="Nelson K.E."/>
            <person name="Gogarten J.P."/>
            <person name="Noll K.M."/>
        </authorList>
    </citation>
    <scope>NUCLEOTIDE SEQUENCE [LARGE SCALE GENOMIC DNA]</scope>
    <source>
        <strain>RQ2</strain>
    </source>
</reference>
<feature type="chain" id="PRO_1000115777" description="1-deoxy-D-xylulose-5-phosphate synthase">
    <location>
        <begin position="1"/>
        <end position="608"/>
    </location>
</feature>
<feature type="binding site" evidence="1">
    <location>
        <position position="66"/>
    </location>
    <ligand>
        <name>thiamine diphosphate</name>
        <dbReference type="ChEBI" id="CHEBI:58937"/>
    </ligand>
</feature>
<feature type="binding site" evidence="1">
    <location>
        <begin position="107"/>
        <end position="109"/>
    </location>
    <ligand>
        <name>thiamine diphosphate</name>
        <dbReference type="ChEBI" id="CHEBI:58937"/>
    </ligand>
</feature>
<feature type="binding site" evidence="1">
    <location>
        <position position="138"/>
    </location>
    <ligand>
        <name>Mg(2+)</name>
        <dbReference type="ChEBI" id="CHEBI:18420"/>
    </ligand>
</feature>
<feature type="binding site" evidence="1">
    <location>
        <begin position="139"/>
        <end position="140"/>
    </location>
    <ligand>
        <name>thiamine diphosphate</name>
        <dbReference type="ChEBI" id="CHEBI:58937"/>
    </ligand>
</feature>
<feature type="binding site" evidence="1">
    <location>
        <position position="167"/>
    </location>
    <ligand>
        <name>Mg(2+)</name>
        <dbReference type="ChEBI" id="CHEBI:18420"/>
    </ligand>
</feature>
<feature type="binding site" evidence="1">
    <location>
        <position position="167"/>
    </location>
    <ligand>
        <name>thiamine diphosphate</name>
        <dbReference type="ChEBI" id="CHEBI:58937"/>
    </ligand>
</feature>
<feature type="binding site" evidence="1">
    <location>
        <position position="277"/>
    </location>
    <ligand>
        <name>thiamine diphosphate</name>
        <dbReference type="ChEBI" id="CHEBI:58937"/>
    </ligand>
</feature>
<feature type="binding site" evidence="1">
    <location>
        <position position="350"/>
    </location>
    <ligand>
        <name>thiamine diphosphate</name>
        <dbReference type="ChEBI" id="CHEBI:58937"/>
    </ligand>
</feature>
<proteinExistence type="inferred from homology"/>
<sequence length="608" mass="67461">MLLDEIKRMSYDELKRLAEDIRKKITEVVLKNGGHLASNLGTIELTLALYRVFDPREDAIIWDTGHQAYTHKILTGRDELFHTIRTFGGLSGFVTRRESPLDWFGTGHAGTSIAAGLGFEKAFELLGEKRHVVVVIGDGALTSGMALEALNQLKNINSKMKIILNDNGMSISPNVGGLAYHLSKLRTSPIYLKGKKVLKKVLEKTEIGFEVEEEMKYLRDSLKGMIQGTNFFESLGLKYFGPFDGHNIELLEKVFKRIRDYDYSSVVHVVTKKGKGFTAAEKDPTKYHSASPSGKPKMLSYSDLLGHTLSGIAREDKKIVAITAAMADGTGLSIFQREHPDRFFDLGITEQTCVTFGAALGLHGMKPVVAIYSTFLQRAYDQIIHDVALQNAPVLFAIDRSGVVGEDGPTHHGLFDMNYLLSVPNMKIISPSSPEEFVSSLYTVLKHLDGPVAIRYPKESFYGEVEFFLENMKEIDLGWKILKRGREAAIIATGTILNEVLKIPLDVTVVNALTVKPLDTTVLKEIAREHDLIITVEEAMKIGGFGSFVAQRLQEMGWQGKIVNLGVEDIFVPHGSRKELLSMLGLDSEGLTKTVLTYIKARSREGKV</sequence>